<comment type="function">
    <text evidence="1">Isomerase that catalyzes the conversion of deoxy-ribose 1-phosphate (dRib-1-P) and ribose 1-phosphate (Rib-1-P) to deoxy-ribose 5-phosphate (dRib-5-P) and ribose 5-phosphate (Rib-5-P), respectively.</text>
</comment>
<comment type="catalytic activity">
    <reaction evidence="1">
        <text>2-deoxy-alpha-D-ribose 1-phosphate = 2-deoxy-D-ribose 5-phosphate</text>
        <dbReference type="Rhea" id="RHEA:27658"/>
        <dbReference type="ChEBI" id="CHEBI:57259"/>
        <dbReference type="ChEBI" id="CHEBI:62877"/>
        <dbReference type="EC" id="5.4.2.7"/>
    </reaction>
</comment>
<comment type="catalytic activity">
    <reaction evidence="1">
        <text>alpha-D-ribose 1-phosphate = D-ribose 5-phosphate</text>
        <dbReference type="Rhea" id="RHEA:18793"/>
        <dbReference type="ChEBI" id="CHEBI:57720"/>
        <dbReference type="ChEBI" id="CHEBI:78346"/>
        <dbReference type="EC" id="5.4.2.7"/>
    </reaction>
</comment>
<comment type="cofactor">
    <cofactor evidence="1">
        <name>Mn(2+)</name>
        <dbReference type="ChEBI" id="CHEBI:29035"/>
    </cofactor>
    <text evidence="1">Binds 2 manganese ions.</text>
</comment>
<comment type="pathway">
    <text evidence="1">Carbohydrate degradation; 2-deoxy-D-ribose 1-phosphate degradation; D-glyceraldehyde 3-phosphate and acetaldehyde from 2-deoxy-alpha-D-ribose 1-phosphate: step 1/2.</text>
</comment>
<comment type="subcellular location">
    <subcellularLocation>
        <location evidence="1">Cytoplasm</location>
    </subcellularLocation>
</comment>
<comment type="similarity">
    <text evidence="1">Belongs to the phosphopentomutase family.</text>
</comment>
<feature type="chain" id="PRO_1000083440" description="Phosphopentomutase">
    <location>
        <begin position="1"/>
        <end position="404"/>
    </location>
</feature>
<feature type="binding site" evidence="1">
    <location>
        <position position="10"/>
    </location>
    <ligand>
        <name>Mn(2+)</name>
        <dbReference type="ChEBI" id="CHEBI:29035"/>
        <label>1</label>
    </ligand>
</feature>
<feature type="binding site" evidence="1">
    <location>
        <position position="303"/>
    </location>
    <ligand>
        <name>Mn(2+)</name>
        <dbReference type="ChEBI" id="CHEBI:29035"/>
        <label>2</label>
    </ligand>
</feature>
<feature type="binding site" evidence="1">
    <location>
        <position position="308"/>
    </location>
    <ligand>
        <name>Mn(2+)</name>
        <dbReference type="ChEBI" id="CHEBI:29035"/>
        <label>2</label>
    </ligand>
</feature>
<feature type="binding site" evidence="1">
    <location>
        <position position="344"/>
    </location>
    <ligand>
        <name>Mn(2+)</name>
        <dbReference type="ChEBI" id="CHEBI:29035"/>
        <label>1</label>
    </ligand>
</feature>
<feature type="binding site" evidence="1">
    <location>
        <position position="345"/>
    </location>
    <ligand>
        <name>Mn(2+)</name>
        <dbReference type="ChEBI" id="CHEBI:29035"/>
        <label>1</label>
    </ligand>
</feature>
<feature type="binding site" evidence="1">
    <location>
        <position position="356"/>
    </location>
    <ligand>
        <name>Mn(2+)</name>
        <dbReference type="ChEBI" id="CHEBI:29035"/>
        <label>2</label>
    </ligand>
</feature>
<protein>
    <recommendedName>
        <fullName evidence="1">Phosphopentomutase</fullName>
        <ecNumber evidence="1">5.4.2.7</ecNumber>
    </recommendedName>
    <alternativeName>
        <fullName evidence="1">Phosphodeoxyribomutase</fullName>
    </alternativeName>
</protein>
<reference key="1">
    <citation type="submission" date="2007-11" db="EMBL/GenBank/DDBJ databases">
        <title>Complete sequence of chromosome of Shewanella baltica OS195.</title>
        <authorList>
            <consortium name="US DOE Joint Genome Institute"/>
            <person name="Copeland A."/>
            <person name="Lucas S."/>
            <person name="Lapidus A."/>
            <person name="Barry K."/>
            <person name="Glavina del Rio T."/>
            <person name="Dalin E."/>
            <person name="Tice H."/>
            <person name="Pitluck S."/>
            <person name="Chain P."/>
            <person name="Malfatti S."/>
            <person name="Shin M."/>
            <person name="Vergez L."/>
            <person name="Schmutz J."/>
            <person name="Larimer F."/>
            <person name="Land M."/>
            <person name="Hauser L."/>
            <person name="Kyrpides N."/>
            <person name="Kim E."/>
            <person name="Brettar I."/>
            <person name="Rodrigues J."/>
            <person name="Konstantinidis K."/>
            <person name="Klappenbach J."/>
            <person name="Hofle M."/>
            <person name="Tiedje J."/>
            <person name="Richardson P."/>
        </authorList>
    </citation>
    <scope>NUCLEOTIDE SEQUENCE [LARGE SCALE GENOMIC DNA]</scope>
    <source>
        <strain>OS195</strain>
    </source>
</reference>
<accession>A9KZ78</accession>
<keyword id="KW-0963">Cytoplasm</keyword>
<keyword id="KW-0413">Isomerase</keyword>
<keyword id="KW-0464">Manganese</keyword>
<keyword id="KW-0479">Metal-binding</keyword>
<gene>
    <name evidence="1" type="primary">deoB</name>
    <name type="ordered locus">Sbal195_3364</name>
</gene>
<dbReference type="EC" id="5.4.2.7" evidence="1"/>
<dbReference type="EMBL" id="CP000891">
    <property type="protein sequence ID" value="ABX50526.1"/>
    <property type="molecule type" value="Genomic_DNA"/>
</dbReference>
<dbReference type="RefSeq" id="WP_006082702.1">
    <property type="nucleotide sequence ID" value="NC_009997.1"/>
</dbReference>
<dbReference type="SMR" id="A9KZ78"/>
<dbReference type="KEGG" id="sbn:Sbal195_3364"/>
<dbReference type="HOGENOM" id="CLU_053861_0_0_6"/>
<dbReference type="UniPathway" id="UPA00002">
    <property type="reaction ID" value="UER00467"/>
</dbReference>
<dbReference type="Proteomes" id="UP000000770">
    <property type="component" value="Chromosome"/>
</dbReference>
<dbReference type="GO" id="GO:0005829">
    <property type="term" value="C:cytosol"/>
    <property type="evidence" value="ECO:0007669"/>
    <property type="project" value="TreeGrafter"/>
</dbReference>
<dbReference type="GO" id="GO:0000287">
    <property type="term" value="F:magnesium ion binding"/>
    <property type="evidence" value="ECO:0007669"/>
    <property type="project" value="InterPro"/>
</dbReference>
<dbReference type="GO" id="GO:0030145">
    <property type="term" value="F:manganese ion binding"/>
    <property type="evidence" value="ECO:0007669"/>
    <property type="project" value="UniProtKB-UniRule"/>
</dbReference>
<dbReference type="GO" id="GO:0008973">
    <property type="term" value="F:phosphopentomutase activity"/>
    <property type="evidence" value="ECO:0007669"/>
    <property type="project" value="UniProtKB-UniRule"/>
</dbReference>
<dbReference type="GO" id="GO:0006018">
    <property type="term" value="P:2-deoxyribose 1-phosphate catabolic process"/>
    <property type="evidence" value="ECO:0007669"/>
    <property type="project" value="UniProtKB-UniRule"/>
</dbReference>
<dbReference type="GO" id="GO:0006015">
    <property type="term" value="P:5-phosphoribose 1-diphosphate biosynthetic process"/>
    <property type="evidence" value="ECO:0007669"/>
    <property type="project" value="UniProtKB-UniPathway"/>
</dbReference>
<dbReference type="GO" id="GO:0043094">
    <property type="term" value="P:metabolic compound salvage"/>
    <property type="evidence" value="ECO:0007669"/>
    <property type="project" value="InterPro"/>
</dbReference>
<dbReference type="GO" id="GO:0009117">
    <property type="term" value="P:nucleotide metabolic process"/>
    <property type="evidence" value="ECO:0007669"/>
    <property type="project" value="InterPro"/>
</dbReference>
<dbReference type="CDD" id="cd16009">
    <property type="entry name" value="PPM"/>
    <property type="match status" value="1"/>
</dbReference>
<dbReference type="FunFam" id="3.30.70.1250:FF:000001">
    <property type="entry name" value="Phosphopentomutase"/>
    <property type="match status" value="1"/>
</dbReference>
<dbReference type="Gene3D" id="3.40.720.10">
    <property type="entry name" value="Alkaline Phosphatase, subunit A"/>
    <property type="match status" value="1"/>
</dbReference>
<dbReference type="Gene3D" id="3.30.70.1250">
    <property type="entry name" value="Phosphopentomutase"/>
    <property type="match status" value="1"/>
</dbReference>
<dbReference type="HAMAP" id="MF_00740">
    <property type="entry name" value="Phosphopentomut"/>
    <property type="match status" value="1"/>
</dbReference>
<dbReference type="InterPro" id="IPR017850">
    <property type="entry name" value="Alkaline_phosphatase_core_sf"/>
</dbReference>
<dbReference type="InterPro" id="IPR010045">
    <property type="entry name" value="DeoB"/>
</dbReference>
<dbReference type="InterPro" id="IPR006124">
    <property type="entry name" value="Metalloenzyme"/>
</dbReference>
<dbReference type="InterPro" id="IPR024052">
    <property type="entry name" value="Phosphopentomutase_DeoB_cap_sf"/>
</dbReference>
<dbReference type="NCBIfam" id="TIGR01696">
    <property type="entry name" value="deoB"/>
    <property type="match status" value="1"/>
</dbReference>
<dbReference type="NCBIfam" id="NF003766">
    <property type="entry name" value="PRK05362.1"/>
    <property type="match status" value="1"/>
</dbReference>
<dbReference type="PANTHER" id="PTHR21110">
    <property type="entry name" value="PHOSPHOPENTOMUTASE"/>
    <property type="match status" value="1"/>
</dbReference>
<dbReference type="PANTHER" id="PTHR21110:SF0">
    <property type="entry name" value="PHOSPHOPENTOMUTASE"/>
    <property type="match status" value="1"/>
</dbReference>
<dbReference type="Pfam" id="PF01676">
    <property type="entry name" value="Metalloenzyme"/>
    <property type="match status" value="1"/>
</dbReference>
<dbReference type="PIRSF" id="PIRSF001491">
    <property type="entry name" value="Ppentomutase"/>
    <property type="match status" value="1"/>
</dbReference>
<dbReference type="SUPFAM" id="SSF53649">
    <property type="entry name" value="Alkaline phosphatase-like"/>
    <property type="match status" value="1"/>
</dbReference>
<dbReference type="SUPFAM" id="SSF143856">
    <property type="entry name" value="DeoB insert domain-like"/>
    <property type="match status" value="1"/>
</dbReference>
<evidence type="ECO:0000255" key="1">
    <source>
        <dbReference type="HAMAP-Rule" id="MF_00740"/>
    </source>
</evidence>
<name>DEOB_SHEB9</name>
<proteinExistence type="inferred from homology"/>
<organism>
    <name type="scientific">Shewanella baltica (strain OS195)</name>
    <dbReference type="NCBI Taxonomy" id="399599"/>
    <lineage>
        <taxon>Bacteria</taxon>
        <taxon>Pseudomonadati</taxon>
        <taxon>Pseudomonadota</taxon>
        <taxon>Gammaproteobacteria</taxon>
        <taxon>Alteromonadales</taxon>
        <taxon>Shewanellaceae</taxon>
        <taxon>Shewanella</taxon>
    </lineage>
</organism>
<sequence>MKRTIIMMLDSFGVGASADAASFGDVGSDTFGHIAKACAEGKADIGREGPLKLPNLARLGLGHAAMESTGAFAPGFGDNVELIGAYGHAQELSSGKDTPSGHWEMAGVPVLFEWGYFSEHQNSFPKELTDKILARAGLDGFLGNCHASGTTILEELGEEHMRSGMPIFYTSADSVFQIACHEETFGLDNLYRLCEITREELEPYNIGRVIARPFDGTGPSDFARTGNRKDYSLAPPAKTVLDKLNEAGGEVVSVGKIADIYAYCGITKKVKANGLEALFDATLAEVKSAGDNTIVFTNFVDFDSHYGHRRDVAGYAKGLEYFDARLPEMLALLGEDDLLILTADHGCDPTWQGTDHTREYVPVLAFGAGLKAGSLGRRKSFADIGQSIASHFKLEPMAYGESFL</sequence>